<name>MORN4_DROME</name>
<reference key="1">
    <citation type="journal article" date="2007" name="Mol. Genet. Genomics">
        <title>Drosophila retinophilin contains MORN repeats and is conserved in humans.</title>
        <authorList>
            <person name="Mecklenburg K.L."/>
        </authorList>
    </citation>
    <scope>NUCLEOTIDE SEQUENCE [GENOMIC DNA / MRNA]</scope>
    <scope>TISSUE SPECIFICITY</scope>
</reference>
<reference key="2">
    <citation type="journal article" date="2000" name="Science">
        <title>The genome sequence of Drosophila melanogaster.</title>
        <authorList>
            <person name="Adams M.D."/>
            <person name="Celniker S.E."/>
            <person name="Holt R.A."/>
            <person name="Evans C.A."/>
            <person name="Gocayne J.D."/>
            <person name="Amanatides P.G."/>
            <person name="Scherer S.E."/>
            <person name="Li P.W."/>
            <person name="Hoskins R.A."/>
            <person name="Galle R.F."/>
            <person name="George R.A."/>
            <person name="Lewis S.E."/>
            <person name="Richards S."/>
            <person name="Ashburner M."/>
            <person name="Henderson S.N."/>
            <person name="Sutton G.G."/>
            <person name="Wortman J.R."/>
            <person name="Yandell M.D."/>
            <person name="Zhang Q."/>
            <person name="Chen L.X."/>
            <person name="Brandon R.C."/>
            <person name="Rogers Y.-H.C."/>
            <person name="Blazej R.G."/>
            <person name="Champe M."/>
            <person name="Pfeiffer B.D."/>
            <person name="Wan K.H."/>
            <person name="Doyle C."/>
            <person name="Baxter E.G."/>
            <person name="Helt G."/>
            <person name="Nelson C.R."/>
            <person name="Miklos G.L.G."/>
            <person name="Abril J.F."/>
            <person name="Agbayani A."/>
            <person name="An H.-J."/>
            <person name="Andrews-Pfannkoch C."/>
            <person name="Baldwin D."/>
            <person name="Ballew R.M."/>
            <person name="Basu A."/>
            <person name="Baxendale J."/>
            <person name="Bayraktaroglu L."/>
            <person name="Beasley E.M."/>
            <person name="Beeson K.Y."/>
            <person name="Benos P.V."/>
            <person name="Berman B.P."/>
            <person name="Bhandari D."/>
            <person name="Bolshakov S."/>
            <person name="Borkova D."/>
            <person name="Botchan M.R."/>
            <person name="Bouck J."/>
            <person name="Brokstein P."/>
            <person name="Brottier P."/>
            <person name="Burtis K.C."/>
            <person name="Busam D.A."/>
            <person name="Butler H."/>
            <person name="Cadieu E."/>
            <person name="Center A."/>
            <person name="Chandra I."/>
            <person name="Cherry J.M."/>
            <person name="Cawley S."/>
            <person name="Dahlke C."/>
            <person name="Davenport L.B."/>
            <person name="Davies P."/>
            <person name="de Pablos B."/>
            <person name="Delcher A."/>
            <person name="Deng Z."/>
            <person name="Mays A.D."/>
            <person name="Dew I."/>
            <person name="Dietz S.M."/>
            <person name="Dodson K."/>
            <person name="Doup L.E."/>
            <person name="Downes M."/>
            <person name="Dugan-Rocha S."/>
            <person name="Dunkov B.C."/>
            <person name="Dunn P."/>
            <person name="Durbin K.J."/>
            <person name="Evangelista C.C."/>
            <person name="Ferraz C."/>
            <person name="Ferriera S."/>
            <person name="Fleischmann W."/>
            <person name="Fosler C."/>
            <person name="Gabrielian A.E."/>
            <person name="Garg N.S."/>
            <person name="Gelbart W.M."/>
            <person name="Glasser K."/>
            <person name="Glodek A."/>
            <person name="Gong F."/>
            <person name="Gorrell J.H."/>
            <person name="Gu Z."/>
            <person name="Guan P."/>
            <person name="Harris M."/>
            <person name="Harris N.L."/>
            <person name="Harvey D.A."/>
            <person name="Heiman T.J."/>
            <person name="Hernandez J.R."/>
            <person name="Houck J."/>
            <person name="Hostin D."/>
            <person name="Houston K.A."/>
            <person name="Howland T.J."/>
            <person name="Wei M.-H."/>
            <person name="Ibegwam C."/>
            <person name="Jalali M."/>
            <person name="Kalush F."/>
            <person name="Karpen G.H."/>
            <person name="Ke Z."/>
            <person name="Kennison J.A."/>
            <person name="Ketchum K.A."/>
            <person name="Kimmel B.E."/>
            <person name="Kodira C.D."/>
            <person name="Kraft C.L."/>
            <person name="Kravitz S."/>
            <person name="Kulp D."/>
            <person name="Lai Z."/>
            <person name="Lasko P."/>
            <person name="Lei Y."/>
            <person name="Levitsky A.A."/>
            <person name="Li J.H."/>
            <person name="Li Z."/>
            <person name="Liang Y."/>
            <person name="Lin X."/>
            <person name="Liu X."/>
            <person name="Mattei B."/>
            <person name="McIntosh T.C."/>
            <person name="McLeod M.P."/>
            <person name="McPherson D."/>
            <person name="Merkulov G."/>
            <person name="Milshina N.V."/>
            <person name="Mobarry C."/>
            <person name="Morris J."/>
            <person name="Moshrefi A."/>
            <person name="Mount S.M."/>
            <person name="Moy M."/>
            <person name="Murphy B."/>
            <person name="Murphy L."/>
            <person name="Muzny D.M."/>
            <person name="Nelson D.L."/>
            <person name="Nelson D.R."/>
            <person name="Nelson K.A."/>
            <person name="Nixon K."/>
            <person name="Nusskern D.R."/>
            <person name="Pacleb J.M."/>
            <person name="Palazzolo M."/>
            <person name="Pittman G.S."/>
            <person name="Pan S."/>
            <person name="Pollard J."/>
            <person name="Puri V."/>
            <person name="Reese M.G."/>
            <person name="Reinert K."/>
            <person name="Remington K."/>
            <person name="Saunders R.D.C."/>
            <person name="Scheeler F."/>
            <person name="Shen H."/>
            <person name="Shue B.C."/>
            <person name="Siden-Kiamos I."/>
            <person name="Simpson M."/>
            <person name="Skupski M.P."/>
            <person name="Smith T.J."/>
            <person name="Spier E."/>
            <person name="Spradling A.C."/>
            <person name="Stapleton M."/>
            <person name="Strong R."/>
            <person name="Sun E."/>
            <person name="Svirskas R."/>
            <person name="Tector C."/>
            <person name="Turner R."/>
            <person name="Venter E."/>
            <person name="Wang A.H."/>
            <person name="Wang X."/>
            <person name="Wang Z.-Y."/>
            <person name="Wassarman D.A."/>
            <person name="Weinstock G.M."/>
            <person name="Weissenbach J."/>
            <person name="Williams S.M."/>
            <person name="Woodage T."/>
            <person name="Worley K.C."/>
            <person name="Wu D."/>
            <person name="Yang S."/>
            <person name="Yao Q.A."/>
            <person name="Ye J."/>
            <person name="Yeh R.-F."/>
            <person name="Zaveri J.S."/>
            <person name="Zhan M."/>
            <person name="Zhang G."/>
            <person name="Zhao Q."/>
            <person name="Zheng L."/>
            <person name="Zheng X.H."/>
            <person name="Zhong F.N."/>
            <person name="Zhong W."/>
            <person name="Zhou X."/>
            <person name="Zhu S.C."/>
            <person name="Zhu X."/>
            <person name="Smith H.O."/>
            <person name="Gibbs R.A."/>
            <person name="Myers E.W."/>
            <person name="Rubin G.M."/>
            <person name="Venter J.C."/>
        </authorList>
    </citation>
    <scope>NUCLEOTIDE SEQUENCE [LARGE SCALE GENOMIC DNA]</scope>
    <source>
        <strain>Berkeley</strain>
    </source>
</reference>
<reference key="3">
    <citation type="journal article" date="2002" name="Genome Biol.">
        <title>Annotation of the Drosophila melanogaster euchromatic genome: a systematic review.</title>
        <authorList>
            <person name="Misra S."/>
            <person name="Crosby M.A."/>
            <person name="Mungall C.J."/>
            <person name="Matthews B.B."/>
            <person name="Campbell K.S."/>
            <person name="Hradecky P."/>
            <person name="Huang Y."/>
            <person name="Kaminker J.S."/>
            <person name="Millburn G.H."/>
            <person name="Prochnik S.E."/>
            <person name="Smith C.D."/>
            <person name="Tupy J.L."/>
            <person name="Whitfield E.J."/>
            <person name="Bayraktaroglu L."/>
            <person name="Berman B.P."/>
            <person name="Bettencourt B.R."/>
            <person name="Celniker S.E."/>
            <person name="de Grey A.D.N.J."/>
            <person name="Drysdale R.A."/>
            <person name="Harris N.L."/>
            <person name="Richter J."/>
            <person name="Russo S."/>
            <person name="Schroeder A.J."/>
            <person name="Shu S.Q."/>
            <person name="Stapleton M."/>
            <person name="Yamada C."/>
            <person name="Ashburner M."/>
            <person name="Gelbart W.M."/>
            <person name="Rubin G.M."/>
            <person name="Lewis S.E."/>
        </authorList>
    </citation>
    <scope>GENOME REANNOTATION</scope>
    <source>
        <strain>Berkeley</strain>
    </source>
</reference>
<reference key="4">
    <citation type="journal article" date="2002" name="Genome Biol.">
        <title>A Drosophila full-length cDNA resource.</title>
        <authorList>
            <person name="Stapleton M."/>
            <person name="Carlson J.W."/>
            <person name="Brokstein P."/>
            <person name="Yu C."/>
            <person name="Champe M."/>
            <person name="George R.A."/>
            <person name="Guarin H."/>
            <person name="Kronmiller B."/>
            <person name="Pacleb J.M."/>
            <person name="Park S."/>
            <person name="Wan K.H."/>
            <person name="Rubin G.M."/>
            <person name="Celniker S.E."/>
        </authorList>
    </citation>
    <scope>NUCLEOTIDE SEQUENCE [LARGE SCALE MRNA]</scope>
    <source>
        <strain evidence="3">Berkeley</strain>
        <tissue evidence="3">Head</tissue>
    </source>
</reference>
<reference key="5">
    <citation type="journal article" date="2010" name="J. Neurosci.">
        <title>Retinophilin is a light-regulated phosphoprotein required to suppress photoreceptor dark noise in Drosophila.</title>
        <authorList>
            <person name="Mecklenburg K.L."/>
            <person name="Takemori N."/>
            <person name="Komori N."/>
            <person name="Chu B."/>
            <person name="Hardie R.C."/>
            <person name="Matsumoto H."/>
            <person name="O'Tousa J.E."/>
        </authorList>
    </citation>
    <scope>FUNCTION</scope>
    <scope>IDENTIFICATION BY MASS SPECTROMETRY</scope>
    <scope>ACETYLATION AT ALA-2</scope>
    <scope>PHOSPHORYLATION</scope>
    <scope>SUBCELLULAR LOCATION</scope>
    <scope>TISSUE SPECIFICITY</scope>
    <scope>DISRUPTION PHENOTYPE</scope>
</reference>
<reference key="6">
    <citation type="journal article" date="2010" name="J. Neurosci.">
        <title>Dependence on a retinophilin/myosin complex for stability of PKC and INAD and termination of phototransduction.</title>
        <authorList>
            <person name="Venkatachalam K."/>
            <person name="Wasserman D."/>
            <person name="Wang X."/>
            <person name="Li R."/>
            <person name="Mills E."/>
            <person name="Elsaesser R."/>
            <person name="Li H.S."/>
            <person name="Montell C."/>
        </authorList>
    </citation>
    <scope>FUNCTION</scope>
    <scope>INTERACTION WITH NINAC</scope>
    <scope>DISRUPTION PHENOTYPE</scope>
    <scope>TISSUE SPECIFICITY</scope>
</reference>
<reference key="7">
    <citation type="journal article" date="2012" name="J. Neurosci.">
        <title>A model of toxic neuropathy in Drosophila reveals a role for MORN4 in promoting axonal degeneration.</title>
        <authorList>
            <person name="Bhattacharya M.R."/>
            <person name="Gerdts J."/>
            <person name="Naylor S.A."/>
            <person name="Royse E.X."/>
            <person name="Ebstein S.Y."/>
            <person name="Sasaki Y."/>
            <person name="Milbrandt J."/>
            <person name="DiAntonio A."/>
        </authorList>
    </citation>
    <scope>FUNCTION</scope>
    <scope>DISRUPTION PHENOTYPE</scope>
</reference>
<reference key="8">
    <citation type="journal article" date="2015" name="PLoS ONE">
        <title>Invertebrate and vertebrate class III myosins interact with MORN repeat-containing adaptor proteins.</title>
        <authorList>
            <person name="Mecklenburg K.L."/>
            <person name="Freed S.A."/>
            <person name="Raval M."/>
            <person name="Quintero O.A."/>
            <person name="Yengo C.M."/>
            <person name="O'Tousa J.E."/>
        </authorList>
    </citation>
    <scope>SUBCELLULAR LOCATION</scope>
    <scope>INTERACTION WITH NINAC</scope>
    <scope>TISSUE SPECIFICITY</scope>
</reference>
<comment type="function">
    <text evidence="5 6 7">Plays a role in promoting axonal degeneration following neuronal injury by toxic insult or trauma (PubMed:22496551). Organizes rhabdomeric components to suppress random activation of the phototransduction cascade and thus increases the signaling fidelity of dark-adapted photoreceptors (PubMed:20107052). The rtp/ninaC complex is required for stability of inad and inac and the normal termination of phototransduction in the retina (PubMed:20739554).</text>
</comment>
<comment type="subunit">
    <text evidence="8">Interacts with ninaC.</text>
</comment>
<comment type="subcellular location">
    <subcellularLocation>
        <location evidence="5 8">Membrane</location>
        <topology evidence="10">Peripheral membrane protein</topology>
    </subcellularLocation>
    <subcellularLocation>
        <location evidence="5 8">Cell projection</location>
        <location evidence="5 8">Rhabdomere membrane</location>
        <topology evidence="10">Peripheral membrane protein</topology>
    </subcellularLocation>
    <text evidence="5 8">Co-localizes with ninaC in the rhabdomere membrane.</text>
</comment>
<comment type="tissue specificity">
    <text evidence="4 5 8">Retina. Expressed primarily in the phototransducing compartment of photoreceptor cells, the rhabdomeres and its expression is dependent on ninaC protein (at protein level).</text>
</comment>
<comment type="PTM">
    <text evidence="5">phosphorylated under dark conditions and is dephosphorylated by light exposure.</text>
</comment>
<comment type="disruption phenotype">
    <text evidence="5 6 7">Severed rtp null axons show significantly reduced and delayed axonal degeneration following axotomy whereas wild-type axons degenerate within the first 24 hrs (PubMed:22496551). Rtp-null mutant flies exhibit age-dependent impairment in the termination of phototransduction in the retina (PubMed:20739554). Photoreceptors show a conspicuously high level of spontaneous dark noise (PubMed:20107052).</text>
</comment>
<accession>Q9VN91</accession>
<evidence type="ECO:0000255" key="1"/>
<evidence type="ECO:0000256" key="2">
    <source>
        <dbReference type="SAM" id="MobiDB-lite"/>
    </source>
</evidence>
<evidence type="ECO:0000269" key="3">
    <source>
    </source>
</evidence>
<evidence type="ECO:0000269" key="4">
    <source>
    </source>
</evidence>
<evidence type="ECO:0000269" key="5">
    <source>
    </source>
</evidence>
<evidence type="ECO:0000269" key="6">
    <source>
    </source>
</evidence>
<evidence type="ECO:0000269" key="7">
    <source>
    </source>
</evidence>
<evidence type="ECO:0000269" key="8">
    <source>
    </source>
</evidence>
<evidence type="ECO:0000303" key="9">
    <source>
    </source>
</evidence>
<evidence type="ECO:0000305" key="10"/>
<evidence type="ECO:0000312" key="11">
    <source>
        <dbReference type="FlyBase" id="FBgn0087005"/>
    </source>
</evidence>
<organism>
    <name type="scientific">Drosophila melanogaster</name>
    <name type="common">Fruit fly</name>
    <dbReference type="NCBI Taxonomy" id="7227"/>
    <lineage>
        <taxon>Eukaryota</taxon>
        <taxon>Metazoa</taxon>
        <taxon>Ecdysozoa</taxon>
        <taxon>Arthropoda</taxon>
        <taxon>Hexapoda</taxon>
        <taxon>Insecta</taxon>
        <taxon>Pterygota</taxon>
        <taxon>Neoptera</taxon>
        <taxon>Endopterygota</taxon>
        <taxon>Diptera</taxon>
        <taxon>Brachycera</taxon>
        <taxon>Muscomorpha</taxon>
        <taxon>Ephydroidea</taxon>
        <taxon>Drosophilidae</taxon>
        <taxon>Drosophila</taxon>
        <taxon>Sophophora</taxon>
    </lineage>
</organism>
<feature type="initiator methionine" description="Removed" evidence="5">
    <location>
        <position position="1"/>
    </location>
</feature>
<feature type="chain" id="PRO_0000441656" description="MORN repeat-containing protein 4 homolog">
    <location>
        <begin position="2"/>
        <end position="198"/>
    </location>
</feature>
<feature type="repeat" description="MORN 1" evidence="1">
    <location>
        <begin position="64"/>
        <end position="87"/>
    </location>
</feature>
<feature type="repeat" description="MORN 2" evidence="1">
    <location>
        <begin position="88"/>
        <end position="109"/>
    </location>
</feature>
<feature type="repeat" description="MORN 3" evidence="1">
    <location>
        <begin position="111"/>
        <end position="132"/>
    </location>
</feature>
<feature type="repeat" description="MORN 4" evidence="1">
    <location>
        <begin position="134"/>
        <end position="153"/>
    </location>
</feature>
<feature type="region of interest" description="Disordered" evidence="2">
    <location>
        <begin position="23"/>
        <end position="46"/>
    </location>
</feature>
<feature type="compositionally biased region" description="Low complexity" evidence="2">
    <location>
        <begin position="23"/>
        <end position="45"/>
    </location>
</feature>
<feature type="modified residue" description="N-acetylalanine" evidence="5">
    <location>
        <position position="2"/>
    </location>
</feature>
<proteinExistence type="evidence at protein level"/>
<sequence length="198" mass="22739">MAMDDYDDDMSSVGVTTARIENQHQQHPHQQGQHGHHQQGQGQSQYSAGAVKVGGWRYEDASRYIGEWNQRGQKHGIGHLQFADGTRYDGQFQEGLSQGVGCLWFADGAKYEGEFHQGWFHGNGIFWRADGMKYEGEFRGGKIWGLGLLTFQDFTHGFPRNEGFFQDCRFMRRRRCPEVVQRAQKCALMARSQCEHPY</sequence>
<dbReference type="EMBL" id="DQ333317">
    <property type="protein sequence ID" value="ABC61052.1"/>
    <property type="molecule type" value="Genomic_DNA"/>
</dbReference>
<dbReference type="EMBL" id="DQ324736">
    <property type="protein sequence ID" value="ABC74791.1"/>
    <property type="molecule type" value="mRNA"/>
</dbReference>
<dbReference type="EMBL" id="AE014297">
    <property type="protein sequence ID" value="AAF52057.1"/>
    <property type="molecule type" value="Genomic_DNA"/>
</dbReference>
<dbReference type="EMBL" id="AY060630">
    <property type="protein sequence ID" value="AAL28178.1"/>
    <property type="molecule type" value="mRNA"/>
</dbReference>
<dbReference type="RefSeq" id="NP_649520.1">
    <property type="nucleotide sequence ID" value="NM_141263.3"/>
</dbReference>
<dbReference type="SMR" id="Q9VN91"/>
<dbReference type="FunCoup" id="Q9VN91">
    <property type="interactions" value="41"/>
</dbReference>
<dbReference type="IntAct" id="Q9VN91">
    <property type="interactions" value="12"/>
</dbReference>
<dbReference type="STRING" id="7227.FBpp0078467"/>
<dbReference type="iPTMnet" id="Q9VN91"/>
<dbReference type="PaxDb" id="7227-FBpp0078467"/>
<dbReference type="DNASU" id="40627"/>
<dbReference type="EnsemblMetazoa" id="FBtr0078825">
    <property type="protein sequence ID" value="FBpp0078467"/>
    <property type="gene ID" value="FBgn0087005"/>
</dbReference>
<dbReference type="GeneID" id="40627"/>
<dbReference type="KEGG" id="dme:Dmel_CG10233"/>
<dbReference type="UCSC" id="CG10233-RA">
    <property type="organism name" value="d. melanogaster"/>
</dbReference>
<dbReference type="AGR" id="FB:FBgn0087005"/>
<dbReference type="CTD" id="107997"/>
<dbReference type="FlyBase" id="FBgn0087005">
    <property type="gene designation" value="rtp"/>
</dbReference>
<dbReference type="VEuPathDB" id="VectorBase:FBgn0087005"/>
<dbReference type="eggNOG" id="KOG0231">
    <property type="taxonomic scope" value="Eukaryota"/>
</dbReference>
<dbReference type="GeneTree" id="ENSGT00940000168493"/>
<dbReference type="HOGENOM" id="CLU_113346_0_0_1"/>
<dbReference type="InParanoid" id="Q9VN91"/>
<dbReference type="OMA" id="WFPDGAK"/>
<dbReference type="OrthoDB" id="406044at2759"/>
<dbReference type="PhylomeDB" id="Q9VN91"/>
<dbReference type="BioGRID-ORCS" id="40627">
    <property type="hits" value="0 hits in 1 CRISPR screen"/>
</dbReference>
<dbReference type="GenomeRNAi" id="40627"/>
<dbReference type="PRO" id="PR:Q9VN91"/>
<dbReference type="Proteomes" id="UP000000803">
    <property type="component" value="Chromosome 3R"/>
</dbReference>
<dbReference type="Bgee" id="FBgn0087005">
    <property type="expression patterns" value="Expressed in photoreceptor cell R7 (Drosophila) in insect head and 64 other cell types or tissues"/>
</dbReference>
<dbReference type="ExpressionAtlas" id="Q9VN91">
    <property type="expression patterns" value="baseline and differential"/>
</dbReference>
<dbReference type="GO" id="GO:0042995">
    <property type="term" value="C:cell projection"/>
    <property type="evidence" value="ECO:0000318"/>
    <property type="project" value="GO_Central"/>
</dbReference>
<dbReference type="GO" id="GO:0016028">
    <property type="term" value="C:rhabdomere"/>
    <property type="evidence" value="ECO:0000314"/>
    <property type="project" value="UniProtKB"/>
</dbReference>
<dbReference type="GO" id="GO:0033583">
    <property type="term" value="C:rhabdomere membrane"/>
    <property type="evidence" value="ECO:0000314"/>
    <property type="project" value="UniProtKB"/>
</dbReference>
<dbReference type="GO" id="GO:0007602">
    <property type="term" value="P:phototransduction"/>
    <property type="evidence" value="ECO:0000315"/>
    <property type="project" value="UniProtKB"/>
</dbReference>
<dbReference type="GO" id="GO:0048678">
    <property type="term" value="P:response to axon injury"/>
    <property type="evidence" value="ECO:0000315"/>
    <property type="project" value="UniProtKB"/>
</dbReference>
<dbReference type="GO" id="GO:0007601">
    <property type="term" value="P:visual perception"/>
    <property type="evidence" value="ECO:0007669"/>
    <property type="project" value="UniProtKB-KW"/>
</dbReference>
<dbReference type="FunFam" id="2.20.110.10:FF:000035">
    <property type="entry name" value="MORN repeat-containing protein 4"/>
    <property type="match status" value="1"/>
</dbReference>
<dbReference type="FunFam" id="2.20.110.10:FF:000043">
    <property type="entry name" value="MORN repeat-containing protein 4 homolog"/>
    <property type="match status" value="1"/>
</dbReference>
<dbReference type="Gene3D" id="2.20.110.10">
    <property type="entry name" value="Histone H3 K4-specific methyltransferase SET7/9 N-terminal domain"/>
    <property type="match status" value="2"/>
</dbReference>
<dbReference type="InterPro" id="IPR003409">
    <property type="entry name" value="MORN"/>
</dbReference>
<dbReference type="InterPro" id="IPR052315">
    <property type="entry name" value="MORN4"/>
</dbReference>
<dbReference type="PANTHER" id="PTHR46614">
    <property type="entry name" value="MORN REPEAT-CONTAINING PROTEIN 4"/>
    <property type="match status" value="1"/>
</dbReference>
<dbReference type="PANTHER" id="PTHR46614:SF1">
    <property type="entry name" value="MORN REPEAT-CONTAINING PROTEIN 4"/>
    <property type="match status" value="1"/>
</dbReference>
<dbReference type="Pfam" id="PF02493">
    <property type="entry name" value="MORN"/>
    <property type="match status" value="4"/>
</dbReference>
<dbReference type="SMART" id="SM00698">
    <property type="entry name" value="MORN"/>
    <property type="match status" value="4"/>
</dbReference>
<dbReference type="SUPFAM" id="SSF82185">
    <property type="entry name" value="Histone H3 K4-specific methyltransferase SET7/9 N-terminal domain"/>
    <property type="match status" value="1"/>
</dbReference>
<protein>
    <recommendedName>
        <fullName>MORN repeat-containing protein 4 homolog</fullName>
    </recommendedName>
    <alternativeName>
        <fullName evidence="11">Retinophilin</fullName>
    </alternativeName>
    <alternativeName>
        <fullName evidence="9">undertaker</fullName>
    </alternativeName>
</protein>
<gene>
    <name evidence="11" type="primary">rtp</name>
    <name type="synonym">morn4</name>
    <name evidence="9" type="synonym">uta</name>
    <name type="ORF">CG10233</name>
</gene>
<keyword id="KW-0007">Acetylation</keyword>
<keyword id="KW-1003">Cell membrane</keyword>
<keyword id="KW-0966">Cell projection</keyword>
<keyword id="KW-0472">Membrane</keyword>
<keyword id="KW-0597">Phosphoprotein</keyword>
<keyword id="KW-1185">Reference proteome</keyword>
<keyword id="KW-0677">Repeat</keyword>
<keyword id="KW-0716">Sensory transduction</keyword>
<keyword id="KW-0844">Vision</keyword>